<name>RISB1_BRUA2</name>
<sequence length="157" mass="16791">MEFLMSKHEADAPHLLIVEARFYDDLADALLDGAKAALDEAGATYDVVTVPGALEIPATISFALDGADNGGTEYDGFVALGTVIRGETYHFDIVSNESCRALTDLSVEESIAIGNGILTVENEEQAWVHARREDKDKGGFAARAALTMIGLRKKFGA</sequence>
<dbReference type="EC" id="2.5.1.78" evidence="1 2 4"/>
<dbReference type="EMBL" id="AM040264">
    <property type="protein sequence ID" value="CAJ10747.1"/>
    <property type="molecule type" value="Genomic_DNA"/>
</dbReference>
<dbReference type="PDB" id="2F59">
    <property type="method" value="X-ray"/>
    <property type="resolution" value="2.30 A"/>
    <property type="chains" value="A/B/C/D/E=1-157"/>
</dbReference>
<dbReference type="PDB" id="2I0F">
    <property type="method" value="X-ray"/>
    <property type="resolution" value="2.22 A"/>
    <property type="chains" value="A/B/C/D/E=1-157"/>
</dbReference>
<dbReference type="PDBsum" id="2F59"/>
<dbReference type="PDBsum" id="2I0F"/>
<dbReference type="SMR" id="Q2YNC6"/>
<dbReference type="STRING" id="359391.BAB1_0791"/>
<dbReference type="KEGG" id="bmf:BAB1_0791"/>
<dbReference type="HOGENOM" id="CLU_089358_1_2_5"/>
<dbReference type="BRENDA" id="2.5.1.78">
    <property type="organism ID" value="994"/>
</dbReference>
<dbReference type="UniPathway" id="UPA00275">
    <property type="reaction ID" value="UER00404"/>
</dbReference>
<dbReference type="Proteomes" id="UP000002719">
    <property type="component" value="Chromosome I"/>
</dbReference>
<dbReference type="GO" id="GO:0005829">
    <property type="term" value="C:cytosol"/>
    <property type="evidence" value="ECO:0007669"/>
    <property type="project" value="TreeGrafter"/>
</dbReference>
<dbReference type="GO" id="GO:0009349">
    <property type="term" value="C:riboflavin synthase complex"/>
    <property type="evidence" value="ECO:0007669"/>
    <property type="project" value="InterPro"/>
</dbReference>
<dbReference type="GO" id="GO:0000906">
    <property type="term" value="F:6,7-dimethyl-8-ribityllumazine synthase activity"/>
    <property type="evidence" value="ECO:0007669"/>
    <property type="project" value="UniProtKB-UniRule"/>
</dbReference>
<dbReference type="GO" id="GO:0009231">
    <property type="term" value="P:riboflavin biosynthetic process"/>
    <property type="evidence" value="ECO:0007669"/>
    <property type="project" value="UniProtKB-UniRule"/>
</dbReference>
<dbReference type="CDD" id="cd09209">
    <property type="entry name" value="Lumazine_synthase-I"/>
    <property type="match status" value="1"/>
</dbReference>
<dbReference type="Gene3D" id="3.40.50.960">
    <property type="entry name" value="Lumazine/riboflavin synthase"/>
    <property type="match status" value="1"/>
</dbReference>
<dbReference type="HAMAP" id="MF_00178">
    <property type="entry name" value="Lumazine_synth"/>
    <property type="match status" value="1"/>
</dbReference>
<dbReference type="InterPro" id="IPR034964">
    <property type="entry name" value="LS"/>
</dbReference>
<dbReference type="InterPro" id="IPR002180">
    <property type="entry name" value="LS/RS"/>
</dbReference>
<dbReference type="InterPro" id="IPR036467">
    <property type="entry name" value="LS/RS_sf"/>
</dbReference>
<dbReference type="NCBIfam" id="TIGR00114">
    <property type="entry name" value="lumazine-synth"/>
    <property type="match status" value="1"/>
</dbReference>
<dbReference type="NCBIfam" id="NF000814">
    <property type="entry name" value="PRK00061.2-2"/>
    <property type="match status" value="1"/>
</dbReference>
<dbReference type="PANTHER" id="PTHR21058:SF0">
    <property type="entry name" value="6,7-DIMETHYL-8-RIBITYLLUMAZINE SYNTHASE"/>
    <property type="match status" value="1"/>
</dbReference>
<dbReference type="PANTHER" id="PTHR21058">
    <property type="entry name" value="6,7-DIMETHYL-8-RIBITYLLUMAZINE SYNTHASE DMRL SYNTHASE LUMAZINE SYNTHASE"/>
    <property type="match status" value="1"/>
</dbReference>
<dbReference type="Pfam" id="PF00885">
    <property type="entry name" value="DMRL_synthase"/>
    <property type="match status" value="1"/>
</dbReference>
<dbReference type="SUPFAM" id="SSF52121">
    <property type="entry name" value="Lumazine synthase"/>
    <property type="match status" value="1"/>
</dbReference>
<keyword id="KW-0002">3D-structure</keyword>
<keyword id="KW-0903">Direct protein sequencing</keyword>
<keyword id="KW-1185">Reference proteome</keyword>
<keyword id="KW-0686">Riboflavin biosynthesis</keyword>
<keyword id="KW-0808">Transferase</keyword>
<reference key="1">
    <citation type="journal article" date="2005" name="Infect. Immun.">
        <title>Whole-genome analyses of speciation events in pathogenic Brucellae.</title>
        <authorList>
            <person name="Chain P.S."/>
            <person name="Comerci D.J."/>
            <person name="Tolmasky M.E."/>
            <person name="Larimer F.W."/>
            <person name="Malfatti S.A."/>
            <person name="Vergez L.M."/>
            <person name="Aguero F."/>
            <person name="Land M.L."/>
            <person name="Ugalde R.A."/>
            <person name="Garcia E."/>
        </authorList>
    </citation>
    <scope>NUCLEOTIDE SEQUENCE [LARGE SCALE GENOMIC DNA]</scope>
    <source>
        <strain>2308</strain>
    </source>
</reference>
<reference key="2">
    <citation type="journal article" date="2006" name="J. Bacteriol.">
        <title>Evolution of vitamin B2 biosynthesis: 6,7-dimethyl-8-ribityllumazine synthases of Brucella.</title>
        <authorList>
            <person name="Zylberman V."/>
            <person name="Klinke S."/>
            <person name="Haase I."/>
            <person name="Bacher A."/>
            <person name="Fischer M."/>
            <person name="Goldbaum F.A."/>
        </authorList>
    </citation>
    <scope>PROTEIN SEQUENCE OF 1-12</scope>
    <scope>FUNCTION</scope>
    <scope>CATALYTIC ACTIVITY</scope>
    <scope>KINETIC PARAMETERS</scope>
    <scope>GENE NAME</scope>
    <scope>SUBUNIT</scope>
    <scope>PATHWAY</scope>
</reference>
<reference key="3">
    <citation type="journal article" date="2010" name="PLoS ONE">
        <title>An atypical riboflavin pathway is essential for Brucella abortus virulence.</title>
        <authorList>
            <person name="Bonomi H.R."/>
            <person name="Marchesini M.I."/>
            <person name="Klinke S."/>
            <person name="Ugalde J.E."/>
            <person name="Zylberman V."/>
            <person name="Ugalde R.A."/>
            <person name="Comerci D.J."/>
            <person name="Goldbaum F.A."/>
        </authorList>
    </citation>
    <scope>FUNCTION</scope>
    <scope>CATALYTIC ACTIVITY</scope>
    <scope>GENE NAME</scope>
    <scope>DISRUPTION PHENOTYPE</scope>
    <scope>INDUCTION</scope>
    <scope>PATHWAY</scope>
    <source>
        <strain>2308</strain>
    </source>
</reference>
<reference key="4">
    <citation type="journal article" date="2007" name="J. Mol. Biol.">
        <title>Structural and kinetic properties of lumazine synthase isoenzymes in the order Rhizobiales.</title>
        <authorList>
            <person name="Klinke S."/>
            <person name="Zylberman V."/>
            <person name="Bonomi H.R."/>
            <person name="Haase I."/>
            <person name="Guimaraes B.G."/>
            <person name="Braden B.C."/>
            <person name="Bacher A."/>
            <person name="Fischer M."/>
            <person name="Goldbaum F.A."/>
        </authorList>
    </citation>
    <scope>X-RAY CRYSTALLOGRAPHY (2.22 ANGSTROMS) OF APOENZYME AND IN COMPLEX WITH SUBSTRATE ANALOG INHIBITOR</scope>
    <scope>SUBUNIT</scope>
</reference>
<proteinExistence type="evidence at protein level"/>
<comment type="function">
    <text evidence="1 2 4">Catalyzes the formation of 6,7-dimethyl-8-ribityllumazine by condensation of 5-amino-6-(D-ribitylamino)uracil with 3,4-dihydroxy-2-butanone 4-phosphate. This is the penultimate step in the biosynthesis of riboflavin.</text>
</comment>
<comment type="catalytic activity">
    <reaction evidence="1 2 4">
        <text>(2S)-2-hydroxy-3-oxobutyl phosphate + 5-amino-6-(D-ribitylamino)uracil = 6,7-dimethyl-8-(1-D-ribityl)lumazine + phosphate + 2 H2O + H(+)</text>
        <dbReference type="Rhea" id="RHEA:26152"/>
        <dbReference type="ChEBI" id="CHEBI:15377"/>
        <dbReference type="ChEBI" id="CHEBI:15378"/>
        <dbReference type="ChEBI" id="CHEBI:15934"/>
        <dbReference type="ChEBI" id="CHEBI:43474"/>
        <dbReference type="ChEBI" id="CHEBI:58201"/>
        <dbReference type="ChEBI" id="CHEBI:58830"/>
        <dbReference type="EC" id="2.5.1.78"/>
    </reaction>
</comment>
<comment type="biophysicochemical properties">
    <kinetics>
        <KM evidence="2">90 uM for 5-amino-6-(D-ribitylamino)uracil (at 37 degrees Celsius and pH 7.0)</KM>
        <KM evidence="2">125 uM for 3,4-dihydroxy-2-butanone 4-phosphate (at 37 degrees Celsius and pH 7.0)</KM>
        <Vmax evidence="2">18.0 nmol/min/mg enzyme (at 37 degrees Celsius and pH 7.0)</Vmax>
    </kinetics>
</comment>
<comment type="pathway">
    <text evidence="1 6 8">Cofactor biosynthesis; riboflavin biosynthesis; riboflavin from 2-hydroxy-3-oxobutyl phosphate and 5-amino-6-(D-ribitylamino)uracil: step 1/2.</text>
</comment>
<comment type="subunit">
    <text evidence="2 3">Homopentamer.</text>
</comment>
<comment type="induction">
    <text evidence="8">The two ribH genes may be differentially expressed during the Brucella infection cycle. Brucella would use RibH1 for flavin biosynthesis during the extracellular phase and RibH2 during intracellular growth.</text>
</comment>
<comment type="disruption phenotype">
    <text evidence="4">Cells lacking this gene are not auxotrophic for riboflavin and grow at wild-type rates in both rich and minimal media. But simultaneous disruption of ribH1 and ribH2 is lethal.</text>
</comment>
<comment type="similarity">
    <text evidence="1">Belongs to the DMRL synthase family.</text>
</comment>
<feature type="chain" id="PRO_0000425959" description="6,7-dimethyl-8-ribityllumazine synthase 1">
    <location>
        <begin position="1"/>
        <end position="157"/>
    </location>
</feature>
<feature type="active site" description="Proton donor" evidence="1">
    <location>
        <position position="90"/>
    </location>
</feature>
<feature type="binding site" evidence="7">
    <location>
        <position position="22"/>
    </location>
    <ligand>
        <name>5-amino-6-(D-ribitylamino)uracil</name>
        <dbReference type="ChEBI" id="CHEBI:15934"/>
    </ligand>
</feature>
<feature type="binding site" evidence="7">
    <location>
        <begin position="53"/>
        <end position="55"/>
    </location>
    <ligand>
        <name>5-amino-6-(D-ribitylamino)uracil</name>
        <dbReference type="ChEBI" id="CHEBI:15934"/>
    </ligand>
</feature>
<feature type="binding site" evidence="1 7">
    <location>
        <begin position="82"/>
        <end position="84"/>
    </location>
    <ligand>
        <name>5-amino-6-(D-ribitylamino)uracil</name>
        <dbReference type="ChEBI" id="CHEBI:15934"/>
    </ligand>
</feature>
<feature type="binding site" evidence="1">
    <location>
        <begin position="87"/>
        <end position="88"/>
    </location>
    <ligand>
        <name>(2S)-2-hydroxy-3-oxobutyl phosphate</name>
        <dbReference type="ChEBI" id="CHEBI:58830"/>
    </ligand>
</feature>
<feature type="binding site" evidence="7">
    <location>
        <position position="115"/>
    </location>
    <ligand>
        <name>5-amino-6-(D-ribitylamino)uracil</name>
        <dbReference type="ChEBI" id="CHEBI:15934"/>
    </ligand>
</feature>
<feature type="binding site" evidence="1">
    <location>
        <position position="129"/>
    </location>
    <ligand>
        <name>(2S)-2-hydroxy-3-oxobutyl phosphate</name>
        <dbReference type="ChEBI" id="CHEBI:58830"/>
    </ligand>
</feature>
<feature type="strand" evidence="9">
    <location>
        <begin position="14"/>
        <end position="20"/>
    </location>
</feature>
<feature type="helix" evidence="9">
    <location>
        <begin position="24"/>
        <end position="40"/>
    </location>
</feature>
<feature type="strand" evidence="9">
    <location>
        <begin position="44"/>
        <end position="52"/>
    </location>
</feature>
<feature type="helix" evidence="9">
    <location>
        <begin position="53"/>
        <end position="55"/>
    </location>
</feature>
<feature type="helix" evidence="9">
    <location>
        <begin position="56"/>
        <end position="68"/>
    </location>
</feature>
<feature type="strand" evidence="9">
    <location>
        <begin position="75"/>
        <end position="84"/>
    </location>
</feature>
<feature type="strand" evidence="9">
    <location>
        <begin position="87"/>
        <end position="89"/>
    </location>
</feature>
<feature type="helix" evidence="9">
    <location>
        <begin position="92"/>
        <end position="108"/>
    </location>
</feature>
<feature type="strand" evidence="9">
    <location>
        <begin position="113"/>
        <end position="122"/>
    </location>
</feature>
<feature type="helix" evidence="9">
    <location>
        <begin position="123"/>
        <end position="130"/>
    </location>
</feature>
<feature type="turn" evidence="9">
    <location>
        <begin position="132"/>
        <end position="135"/>
    </location>
</feature>
<feature type="helix" evidence="9">
    <location>
        <begin position="137"/>
        <end position="154"/>
    </location>
</feature>
<gene>
    <name type="primary">ribH1</name>
    <name type="ordered locus">BAB1_0791</name>
</gene>
<evidence type="ECO:0000255" key="1">
    <source>
        <dbReference type="HAMAP-Rule" id="MF_00178"/>
    </source>
</evidence>
<evidence type="ECO:0000269" key="2">
    <source>
    </source>
</evidence>
<evidence type="ECO:0000269" key="3">
    <source>
    </source>
</evidence>
<evidence type="ECO:0000269" key="4">
    <source>
    </source>
</evidence>
<evidence type="ECO:0000303" key="5">
    <source>
    </source>
</evidence>
<evidence type="ECO:0000305" key="6">
    <source>
    </source>
</evidence>
<evidence type="ECO:0000305" key="7">
    <source>
    </source>
</evidence>
<evidence type="ECO:0000305" key="8">
    <source>
    </source>
</evidence>
<evidence type="ECO:0007829" key="9">
    <source>
        <dbReference type="PDB" id="2I0F"/>
    </source>
</evidence>
<accession>Q2YNC6</accession>
<organism>
    <name type="scientific">Brucella abortus (strain 2308)</name>
    <dbReference type="NCBI Taxonomy" id="359391"/>
    <lineage>
        <taxon>Bacteria</taxon>
        <taxon>Pseudomonadati</taxon>
        <taxon>Pseudomonadota</taxon>
        <taxon>Alphaproteobacteria</taxon>
        <taxon>Hyphomicrobiales</taxon>
        <taxon>Brucellaceae</taxon>
        <taxon>Brucella/Ochrobactrum group</taxon>
        <taxon>Brucella</taxon>
    </lineage>
</organism>
<protein>
    <recommendedName>
        <fullName evidence="1">6,7-dimethyl-8-ribityllumazine synthase 1</fullName>
        <shortName evidence="1">DMRL synthase 1</shortName>
        <shortName evidence="1">LS 1</shortName>
        <shortName evidence="1">Lumazine synthase 1</shortName>
        <ecNumber evidence="1 2 4">2.5.1.78</ecNumber>
    </recommendedName>
    <alternativeName>
        <fullName evidence="5">Type I lumazine synthase</fullName>
    </alternativeName>
</protein>